<reference key="1">
    <citation type="journal article" date="2005" name="DNA Res.">
        <title>Complete genome sequence of the facultative anaerobic magnetotactic bacterium Magnetospirillum sp. strain AMB-1.</title>
        <authorList>
            <person name="Matsunaga T."/>
            <person name="Okamura Y."/>
            <person name="Fukuda Y."/>
            <person name="Wahyudi A.T."/>
            <person name="Murase Y."/>
            <person name="Takeyama H."/>
        </authorList>
    </citation>
    <scope>NUCLEOTIDE SEQUENCE [LARGE SCALE GENOMIC DNA]</scope>
    <source>
        <strain>ATCC 700264 / AMB-1</strain>
    </source>
</reference>
<organism>
    <name type="scientific">Paramagnetospirillum magneticum (strain ATCC 700264 / AMB-1)</name>
    <name type="common">Magnetospirillum magneticum</name>
    <dbReference type="NCBI Taxonomy" id="342108"/>
    <lineage>
        <taxon>Bacteria</taxon>
        <taxon>Pseudomonadati</taxon>
        <taxon>Pseudomonadota</taxon>
        <taxon>Alphaproteobacteria</taxon>
        <taxon>Rhodospirillales</taxon>
        <taxon>Magnetospirillaceae</taxon>
        <taxon>Paramagnetospirillum</taxon>
    </lineage>
</organism>
<accession>Q2W477</accession>
<name>SSRP_PARM1</name>
<proteinExistence type="inferred from homology"/>
<dbReference type="EMBL" id="AP007255">
    <property type="protein sequence ID" value="BAE51348.1"/>
    <property type="molecule type" value="Genomic_DNA"/>
</dbReference>
<dbReference type="RefSeq" id="WP_011384925.1">
    <property type="nucleotide sequence ID" value="NC_007626.1"/>
</dbReference>
<dbReference type="SMR" id="Q2W477"/>
<dbReference type="STRING" id="342108.amb2544"/>
<dbReference type="KEGG" id="mag:amb2544"/>
<dbReference type="HOGENOM" id="CLU_108953_0_1_5"/>
<dbReference type="OrthoDB" id="9805462at2"/>
<dbReference type="Proteomes" id="UP000007058">
    <property type="component" value="Chromosome"/>
</dbReference>
<dbReference type="GO" id="GO:0005829">
    <property type="term" value="C:cytosol"/>
    <property type="evidence" value="ECO:0007669"/>
    <property type="project" value="TreeGrafter"/>
</dbReference>
<dbReference type="GO" id="GO:0003723">
    <property type="term" value="F:RNA binding"/>
    <property type="evidence" value="ECO:0007669"/>
    <property type="project" value="UniProtKB-UniRule"/>
</dbReference>
<dbReference type="GO" id="GO:0070929">
    <property type="term" value="P:trans-translation"/>
    <property type="evidence" value="ECO:0007669"/>
    <property type="project" value="UniProtKB-UniRule"/>
</dbReference>
<dbReference type="CDD" id="cd09294">
    <property type="entry name" value="SmpB"/>
    <property type="match status" value="1"/>
</dbReference>
<dbReference type="Gene3D" id="2.40.280.10">
    <property type="match status" value="1"/>
</dbReference>
<dbReference type="HAMAP" id="MF_00023">
    <property type="entry name" value="SmpB"/>
    <property type="match status" value="1"/>
</dbReference>
<dbReference type="InterPro" id="IPR023620">
    <property type="entry name" value="SmpB"/>
</dbReference>
<dbReference type="InterPro" id="IPR000037">
    <property type="entry name" value="SsrA-bd_prot"/>
</dbReference>
<dbReference type="InterPro" id="IPR020081">
    <property type="entry name" value="SsrA-bd_prot_CS"/>
</dbReference>
<dbReference type="NCBIfam" id="NF003843">
    <property type="entry name" value="PRK05422.1"/>
    <property type="match status" value="1"/>
</dbReference>
<dbReference type="NCBIfam" id="TIGR00086">
    <property type="entry name" value="smpB"/>
    <property type="match status" value="1"/>
</dbReference>
<dbReference type="PANTHER" id="PTHR30308:SF2">
    <property type="entry name" value="SSRA-BINDING PROTEIN"/>
    <property type="match status" value="1"/>
</dbReference>
<dbReference type="PANTHER" id="PTHR30308">
    <property type="entry name" value="TMRNA-BINDING COMPONENT OF TRANS-TRANSLATION TAGGING COMPLEX"/>
    <property type="match status" value="1"/>
</dbReference>
<dbReference type="Pfam" id="PF01668">
    <property type="entry name" value="SmpB"/>
    <property type="match status" value="1"/>
</dbReference>
<dbReference type="SUPFAM" id="SSF74982">
    <property type="entry name" value="Small protein B (SmpB)"/>
    <property type="match status" value="1"/>
</dbReference>
<dbReference type="PROSITE" id="PS01317">
    <property type="entry name" value="SSRP"/>
    <property type="match status" value="1"/>
</dbReference>
<evidence type="ECO:0000255" key="1">
    <source>
        <dbReference type="HAMAP-Rule" id="MF_00023"/>
    </source>
</evidence>
<protein>
    <recommendedName>
        <fullName evidence="1">SsrA-binding protein</fullName>
    </recommendedName>
    <alternativeName>
        <fullName evidence="1">Small protein B</fullName>
    </alternativeName>
</protein>
<sequence length="153" mass="17488">MVLPGHVAAQNRRARHEYFIVSEVEAGIMLVGTEVKSLRVGKGNINEAFAGPMQGELFLFNAYIPEYQSKMPFPHETRRPRKLLLHKREMAKLMSAITKDGMTLVPLDIHFGQRGIAKIQLGLAKGKKLHDKREAIKERDWNRDKARLMRDKG</sequence>
<gene>
    <name evidence="1" type="primary">smpB</name>
    <name type="ordered locus">amb2544</name>
</gene>
<keyword id="KW-0963">Cytoplasm</keyword>
<keyword id="KW-0694">RNA-binding</keyword>
<comment type="function">
    <text evidence="1">Required for rescue of stalled ribosomes mediated by trans-translation. Binds to transfer-messenger RNA (tmRNA), required for stable association of tmRNA with ribosomes. tmRNA and SmpB together mimic tRNA shape, replacing the anticodon stem-loop with SmpB. tmRNA is encoded by the ssrA gene; the 2 termini fold to resemble tRNA(Ala) and it encodes a 'tag peptide', a short internal open reading frame. During trans-translation Ala-aminoacylated tmRNA acts like a tRNA, entering the A-site of stalled ribosomes, displacing the stalled mRNA. The ribosome then switches to translate the ORF on the tmRNA; the nascent peptide is terminated with the 'tag peptide' encoded by the tmRNA and targeted for degradation. The ribosome is freed to recommence translation, which seems to be the essential function of trans-translation.</text>
</comment>
<comment type="subcellular location">
    <subcellularLocation>
        <location evidence="1">Cytoplasm</location>
    </subcellularLocation>
    <text evidence="1">The tmRNA-SmpB complex associates with stalled 70S ribosomes.</text>
</comment>
<comment type="similarity">
    <text evidence="1">Belongs to the SmpB family.</text>
</comment>
<feature type="chain" id="PRO_1000002081" description="SsrA-binding protein">
    <location>
        <begin position="1"/>
        <end position="153"/>
    </location>
</feature>